<name>URE1_MARN8</name>
<keyword id="KW-0963">Cytoplasm</keyword>
<keyword id="KW-0378">Hydrolase</keyword>
<keyword id="KW-0479">Metal-binding</keyword>
<keyword id="KW-0533">Nickel</keyword>
<proteinExistence type="inferred from homology"/>
<protein>
    <recommendedName>
        <fullName evidence="1">Urease subunit alpha</fullName>
        <ecNumber evidence="1">3.5.1.5</ecNumber>
    </recommendedName>
    <alternativeName>
        <fullName evidence="1">Urea amidohydrolase subunit alpha</fullName>
    </alternativeName>
</protein>
<reference key="1">
    <citation type="journal article" date="2011" name="Appl. Environ. Microbiol.">
        <title>Genomic potential of Marinobacter aquaeolei, a biogeochemical 'opportunitroph'.</title>
        <authorList>
            <person name="Singer E."/>
            <person name="Webb E.A."/>
            <person name="Nelson W.C."/>
            <person name="Heidelberg J.F."/>
            <person name="Ivanova N."/>
            <person name="Pati A."/>
            <person name="Edwards K.J."/>
        </authorList>
    </citation>
    <scope>NUCLEOTIDE SEQUENCE [LARGE SCALE GENOMIC DNA]</scope>
    <source>
        <strain>ATCC 700491 / DSM 11845 / VT8</strain>
    </source>
</reference>
<dbReference type="EC" id="3.5.1.5" evidence="1"/>
<dbReference type="EMBL" id="CP000514">
    <property type="protein sequence ID" value="ABM20067.1"/>
    <property type="molecule type" value="Genomic_DNA"/>
</dbReference>
<dbReference type="RefSeq" id="WP_011786435.1">
    <property type="nucleotide sequence ID" value="NC_008740.1"/>
</dbReference>
<dbReference type="SMR" id="A1U4Z8"/>
<dbReference type="STRING" id="351348.Maqu_2993"/>
<dbReference type="MEROPS" id="M38.982"/>
<dbReference type="KEGG" id="maq:Maqu_2993"/>
<dbReference type="eggNOG" id="COG0804">
    <property type="taxonomic scope" value="Bacteria"/>
</dbReference>
<dbReference type="HOGENOM" id="CLU_000980_0_0_6"/>
<dbReference type="OrthoDB" id="9802793at2"/>
<dbReference type="UniPathway" id="UPA00258">
    <property type="reaction ID" value="UER00370"/>
</dbReference>
<dbReference type="Proteomes" id="UP000000998">
    <property type="component" value="Chromosome"/>
</dbReference>
<dbReference type="GO" id="GO:0005737">
    <property type="term" value="C:cytoplasm"/>
    <property type="evidence" value="ECO:0007669"/>
    <property type="project" value="UniProtKB-SubCell"/>
</dbReference>
<dbReference type="GO" id="GO:0016151">
    <property type="term" value="F:nickel cation binding"/>
    <property type="evidence" value="ECO:0007669"/>
    <property type="project" value="UniProtKB-UniRule"/>
</dbReference>
<dbReference type="GO" id="GO:0009039">
    <property type="term" value="F:urease activity"/>
    <property type="evidence" value="ECO:0007669"/>
    <property type="project" value="UniProtKB-UniRule"/>
</dbReference>
<dbReference type="GO" id="GO:0043419">
    <property type="term" value="P:urea catabolic process"/>
    <property type="evidence" value="ECO:0007669"/>
    <property type="project" value="UniProtKB-UniRule"/>
</dbReference>
<dbReference type="CDD" id="cd00375">
    <property type="entry name" value="Urease_alpha"/>
    <property type="match status" value="1"/>
</dbReference>
<dbReference type="Gene3D" id="3.20.20.140">
    <property type="entry name" value="Metal-dependent hydrolases"/>
    <property type="match status" value="1"/>
</dbReference>
<dbReference type="Gene3D" id="2.30.40.10">
    <property type="entry name" value="Urease, subunit C, domain 1"/>
    <property type="match status" value="1"/>
</dbReference>
<dbReference type="HAMAP" id="MF_01953">
    <property type="entry name" value="Urease_alpha"/>
    <property type="match status" value="1"/>
</dbReference>
<dbReference type="InterPro" id="IPR006680">
    <property type="entry name" value="Amidohydro-rel"/>
</dbReference>
<dbReference type="InterPro" id="IPR011059">
    <property type="entry name" value="Metal-dep_hydrolase_composite"/>
</dbReference>
<dbReference type="InterPro" id="IPR032466">
    <property type="entry name" value="Metal_Hydrolase"/>
</dbReference>
<dbReference type="InterPro" id="IPR011612">
    <property type="entry name" value="Urease_alpha_N_dom"/>
</dbReference>
<dbReference type="InterPro" id="IPR050112">
    <property type="entry name" value="Urease_alpha_subunit"/>
</dbReference>
<dbReference type="InterPro" id="IPR017950">
    <property type="entry name" value="Urease_AS"/>
</dbReference>
<dbReference type="InterPro" id="IPR005848">
    <property type="entry name" value="Urease_asu"/>
</dbReference>
<dbReference type="InterPro" id="IPR017951">
    <property type="entry name" value="Urease_asu_c"/>
</dbReference>
<dbReference type="InterPro" id="IPR029754">
    <property type="entry name" value="Urease_Ni-bd"/>
</dbReference>
<dbReference type="NCBIfam" id="NF009685">
    <property type="entry name" value="PRK13206.1"/>
    <property type="match status" value="1"/>
</dbReference>
<dbReference type="NCBIfam" id="NF009686">
    <property type="entry name" value="PRK13207.1"/>
    <property type="match status" value="1"/>
</dbReference>
<dbReference type="NCBIfam" id="TIGR01792">
    <property type="entry name" value="urease_alph"/>
    <property type="match status" value="1"/>
</dbReference>
<dbReference type="PANTHER" id="PTHR43440">
    <property type="entry name" value="UREASE"/>
    <property type="match status" value="1"/>
</dbReference>
<dbReference type="PANTHER" id="PTHR43440:SF1">
    <property type="entry name" value="UREASE"/>
    <property type="match status" value="1"/>
</dbReference>
<dbReference type="Pfam" id="PF01979">
    <property type="entry name" value="Amidohydro_1"/>
    <property type="match status" value="1"/>
</dbReference>
<dbReference type="Pfam" id="PF00449">
    <property type="entry name" value="Urease_alpha"/>
    <property type="match status" value="1"/>
</dbReference>
<dbReference type="PRINTS" id="PR01752">
    <property type="entry name" value="UREASE"/>
</dbReference>
<dbReference type="SUPFAM" id="SSF51338">
    <property type="entry name" value="Composite domain of metallo-dependent hydrolases"/>
    <property type="match status" value="2"/>
</dbReference>
<dbReference type="SUPFAM" id="SSF51556">
    <property type="entry name" value="Metallo-dependent hydrolases"/>
    <property type="match status" value="1"/>
</dbReference>
<dbReference type="PROSITE" id="PS01120">
    <property type="entry name" value="UREASE_1"/>
    <property type="match status" value="1"/>
</dbReference>
<dbReference type="PROSITE" id="PS00145">
    <property type="entry name" value="UREASE_2"/>
    <property type="match status" value="1"/>
</dbReference>
<dbReference type="PROSITE" id="PS51368">
    <property type="entry name" value="UREASE_3"/>
    <property type="match status" value="1"/>
</dbReference>
<feature type="chain" id="PRO_1000070664" description="Urease subunit alpha">
    <location>
        <begin position="1"/>
        <end position="567"/>
    </location>
</feature>
<feature type="domain" description="Urease" evidence="1">
    <location>
        <begin position="128"/>
        <end position="567"/>
    </location>
</feature>
<feature type="active site" description="Proton donor" evidence="1">
    <location>
        <position position="319"/>
    </location>
</feature>
<feature type="binding site" evidence="1">
    <location>
        <position position="133"/>
    </location>
    <ligand>
        <name>Ni(2+)</name>
        <dbReference type="ChEBI" id="CHEBI:49786"/>
        <label>1</label>
    </ligand>
</feature>
<feature type="binding site" evidence="1">
    <location>
        <position position="135"/>
    </location>
    <ligand>
        <name>Ni(2+)</name>
        <dbReference type="ChEBI" id="CHEBI:49786"/>
        <label>1</label>
    </ligand>
</feature>
<feature type="binding site" description="via carbamate group" evidence="1">
    <location>
        <position position="216"/>
    </location>
    <ligand>
        <name>Ni(2+)</name>
        <dbReference type="ChEBI" id="CHEBI:49786"/>
        <label>1</label>
    </ligand>
</feature>
<feature type="binding site" description="via carbamate group" evidence="1">
    <location>
        <position position="216"/>
    </location>
    <ligand>
        <name>Ni(2+)</name>
        <dbReference type="ChEBI" id="CHEBI:49786"/>
        <label>2</label>
    </ligand>
</feature>
<feature type="binding site" evidence="1">
    <location>
        <position position="218"/>
    </location>
    <ligand>
        <name>substrate</name>
    </ligand>
</feature>
<feature type="binding site" evidence="1">
    <location>
        <position position="245"/>
    </location>
    <ligand>
        <name>Ni(2+)</name>
        <dbReference type="ChEBI" id="CHEBI:49786"/>
        <label>2</label>
    </ligand>
</feature>
<feature type="binding site" evidence="1">
    <location>
        <position position="271"/>
    </location>
    <ligand>
        <name>Ni(2+)</name>
        <dbReference type="ChEBI" id="CHEBI:49786"/>
        <label>2</label>
    </ligand>
</feature>
<feature type="binding site" evidence="1">
    <location>
        <position position="359"/>
    </location>
    <ligand>
        <name>Ni(2+)</name>
        <dbReference type="ChEBI" id="CHEBI:49786"/>
        <label>1</label>
    </ligand>
</feature>
<feature type="modified residue" description="N6-carboxylysine" evidence="1">
    <location>
        <position position="216"/>
    </location>
</feature>
<organism>
    <name type="scientific">Marinobacter nauticus (strain ATCC 700491 / DSM 11845 / VT8)</name>
    <name type="common">Marinobacter aquaeolei</name>
    <dbReference type="NCBI Taxonomy" id="351348"/>
    <lineage>
        <taxon>Bacteria</taxon>
        <taxon>Pseudomonadati</taxon>
        <taxon>Pseudomonadota</taxon>
        <taxon>Gammaproteobacteria</taxon>
        <taxon>Pseudomonadales</taxon>
        <taxon>Marinobacteraceae</taxon>
        <taxon>Marinobacter</taxon>
    </lineage>
</organism>
<accession>A1U4Z8</accession>
<comment type="catalytic activity">
    <reaction evidence="1">
        <text>urea + 2 H2O + H(+) = hydrogencarbonate + 2 NH4(+)</text>
        <dbReference type="Rhea" id="RHEA:20557"/>
        <dbReference type="ChEBI" id="CHEBI:15377"/>
        <dbReference type="ChEBI" id="CHEBI:15378"/>
        <dbReference type="ChEBI" id="CHEBI:16199"/>
        <dbReference type="ChEBI" id="CHEBI:17544"/>
        <dbReference type="ChEBI" id="CHEBI:28938"/>
        <dbReference type="EC" id="3.5.1.5"/>
    </reaction>
</comment>
<comment type="cofactor">
    <cofactor evidence="1">
        <name>Ni cation</name>
        <dbReference type="ChEBI" id="CHEBI:25516"/>
    </cofactor>
    <text evidence="1">Binds 2 nickel ions per subunit.</text>
</comment>
<comment type="pathway">
    <text evidence="1">Nitrogen metabolism; urea degradation; CO(2) and NH(3) from urea (urease route): step 1/1.</text>
</comment>
<comment type="subunit">
    <text evidence="1">Heterotrimer of UreA (gamma), UreB (beta) and UreC (alpha) subunits. Three heterotrimers associate to form the active enzyme.</text>
</comment>
<comment type="subcellular location">
    <subcellularLocation>
        <location evidence="1">Cytoplasm</location>
    </subcellularLocation>
</comment>
<comment type="PTM">
    <text evidence="1">Carboxylation allows a single lysine to coordinate two nickel ions.</text>
</comment>
<comment type="similarity">
    <text evidence="1">Belongs to the metallo-dependent hydrolases superfamily. Urease alpha subunit family.</text>
</comment>
<evidence type="ECO:0000255" key="1">
    <source>
        <dbReference type="HAMAP-Rule" id="MF_01953"/>
    </source>
</evidence>
<sequence>MKISRQAYADMYGPTVGDRVRLGDTELWIEVEEDHTHYGDEVKFGGGKVIRDGMGQSQRCDDAVMDTVITNALILDWWGIVKADVGIQKGRIAAIGKAGNPDTQPDVTIVIGPGTEIIAGEGKILTAGGIDPHIHFICPQQVEEALMSGVTTMLGGGTGPATGTNATTCTPGPWHIGKMLQAVDSLPMNIGFLGKGNASLPEALELQIKAGVIGLKLHEDWGTTPASIDNCLTVADQYDIQVAIHTDTLNESGFVEDTLAAFKGRCIHTFHTEGAGGGHAPDIITACSKDYVLPSSTNPTRPYTVNTVDEHLDMLMVCHHLDPNIPEDVAFADSRIRRETIAAEDILHDMGVISMISSDSQAMGRVGEVICRTWQTAHKMKVQRGLLPEDQERGADNFRAKRYIAKYTINPAITHGIAHDVGSVEVGKLADLVLWSPAFFGVKPACILKGGMIAAAPMGDPNASIPTPQPVHYRPMFGAFGKAASATRLTFVSQAALDAKIGEELGLDSPLSACKGVREVRKRHMKLNDACPHLTVDPQTYEVHADGELLTCEPATELPLAQLYHLF</sequence>
<gene>
    <name evidence="1" type="primary">ureC</name>
    <name type="ordered locus">Maqu_2993</name>
</gene>